<proteinExistence type="evidence at protein level"/>
<reference key="1">
    <citation type="journal article" date="1999" name="Genetics">
        <title>Divergence of the hyperthermophilic archaea Pyrococcus furiosus and P. horikoshii inferred from complete genomic sequences.</title>
        <authorList>
            <person name="Maeder D.L."/>
            <person name="Weiss R.B."/>
            <person name="Dunn D.M."/>
            <person name="Cherry J.L."/>
            <person name="Gonzalez J.M."/>
            <person name="DiRuggiero J."/>
            <person name="Robb F.T."/>
        </authorList>
    </citation>
    <scope>NUCLEOTIDE SEQUENCE [LARGE SCALE GENOMIC DNA]</scope>
    <source>
        <strain>ATCC 43587 / DSM 3638 / JCM 8422 / Vc1</strain>
    </source>
</reference>
<reference key="2">
    <citation type="journal article" date="2003" name="Extremophiles">
        <title>Purification and characterization of 5'-methylthioadenosine phosphorylase from the hyperthermophilic archaeon Pyrococcus furiosus: substrate specificity and primary structure analysis.</title>
        <authorList>
            <person name="Cacciapuoti G."/>
            <person name="Bertoldo C."/>
            <person name="Brio A."/>
            <person name="Zappia V."/>
            <person name="Porcelli M."/>
        </authorList>
    </citation>
    <scope>PROTEIN SEQUENCE OF 1-27</scope>
    <scope>FUNCTION</scope>
    <scope>BIOPHYSICOCHEMICAL PROPERTIES</scope>
    <scope>SUBUNIT</scope>
</reference>
<reference key="3">
    <citation type="journal article" date="2004" name="Eur. J. Biochem.">
        <title>Methylthioadenosine phosphorylase from the archaeon Pyrococcus furiosus. Mechanism of the reaction and assignment of disulfide bonds.</title>
        <authorList>
            <person name="Cacciapuoti G."/>
            <person name="Moretti M.A."/>
            <person name="Forte S."/>
            <person name="Brio A."/>
            <person name="Camardella L."/>
            <person name="Zappia V."/>
            <person name="Porcelli M."/>
        </authorList>
    </citation>
    <scope>FUNCTION</scope>
    <scope>DISULFIDE BONDS</scope>
</reference>
<reference key="4">
    <citation type="journal article" date="2011" name="Biochim. Biophys. Acta">
        <title>Unraveling the structural and functional differences between purine nucleoside phosphorylase and 5'-deoxy-5'-methylthioadenosine phosphorylase from the archaeon Pyrococcus furiosus.</title>
        <authorList>
            <person name="Cacciapuoti G."/>
            <person name="Marabotti A."/>
            <person name="Fuccio F."/>
            <person name="Porcelli M."/>
        </authorList>
    </citation>
    <scope>FUNCTION</scope>
</reference>
<sequence>MPKIGIIGGSGVYGIFEPKETVKVHTPYGRPSAPVEIGEIEGVEVAFIPRHGKYHEFPPHEVPYRANIWALHELGVERVIAVNAVGSLKEEYKPGDIVIIDQFIDFTKKREYTFYNGPRVAHISMADPFCPELRRIFIETAKELNLPVHEKGTYICIEGPRFSTRAESRMFRQFADVIGMTLVPEVNLARELGMCYVNISTVTDYDVWAEKPVDAQEVLRVMKENEEKVQKLLKRAIPKIPEERKCGCADVLKTMFV</sequence>
<organism>
    <name type="scientific">Pyrococcus furiosus (strain ATCC 43587 / DSM 3638 / JCM 8422 / Vc1)</name>
    <dbReference type="NCBI Taxonomy" id="186497"/>
    <lineage>
        <taxon>Archaea</taxon>
        <taxon>Methanobacteriati</taxon>
        <taxon>Methanobacteriota</taxon>
        <taxon>Thermococci</taxon>
        <taxon>Thermococcales</taxon>
        <taxon>Thermococcaceae</taxon>
        <taxon>Pyrococcus</taxon>
    </lineage>
</organism>
<accession>Q8U4Q8</accession>
<dbReference type="EC" id="2.4.2.28" evidence="1"/>
<dbReference type="EMBL" id="AE009950">
    <property type="protein sequence ID" value="AAL80140.1"/>
    <property type="molecule type" value="Genomic_DNA"/>
</dbReference>
<dbReference type="RefSeq" id="WP_011011128.1">
    <property type="nucleotide sequence ID" value="NZ_CP023154.1"/>
</dbReference>
<dbReference type="SMR" id="Q8U4Q8"/>
<dbReference type="STRING" id="186497.PF0016"/>
<dbReference type="PaxDb" id="186497-PF0016"/>
<dbReference type="KEGG" id="pfu:PF0016"/>
<dbReference type="PATRIC" id="fig|186497.12.peg.17"/>
<dbReference type="eggNOG" id="arCOG01327">
    <property type="taxonomic scope" value="Archaea"/>
</dbReference>
<dbReference type="HOGENOM" id="CLU_054456_0_2_2"/>
<dbReference type="OrthoDB" id="7681at2157"/>
<dbReference type="PhylomeDB" id="Q8U4Q8"/>
<dbReference type="BRENDA" id="2.4.2.28">
    <property type="organism ID" value="5243"/>
</dbReference>
<dbReference type="SABIO-RK" id="Q8U4Q8"/>
<dbReference type="UniPathway" id="UPA00904">
    <property type="reaction ID" value="UER00873"/>
</dbReference>
<dbReference type="Proteomes" id="UP000001013">
    <property type="component" value="Chromosome"/>
</dbReference>
<dbReference type="GO" id="GO:0005829">
    <property type="term" value="C:cytosol"/>
    <property type="evidence" value="ECO:0007669"/>
    <property type="project" value="TreeGrafter"/>
</dbReference>
<dbReference type="GO" id="GO:0017061">
    <property type="term" value="F:S-methyl-5-thioadenosine phosphorylase activity"/>
    <property type="evidence" value="ECO:0007669"/>
    <property type="project" value="UniProtKB-UniRule"/>
</dbReference>
<dbReference type="GO" id="GO:0019509">
    <property type="term" value="P:L-methionine salvage from methylthioadenosine"/>
    <property type="evidence" value="ECO:0007669"/>
    <property type="project" value="UniProtKB-UniRule"/>
</dbReference>
<dbReference type="GO" id="GO:0006166">
    <property type="term" value="P:purine ribonucleoside salvage"/>
    <property type="evidence" value="ECO:0007669"/>
    <property type="project" value="UniProtKB-KW"/>
</dbReference>
<dbReference type="CDD" id="cd09010">
    <property type="entry name" value="MTAP_SsMTAPII_like_MTIP"/>
    <property type="match status" value="1"/>
</dbReference>
<dbReference type="FunFam" id="3.40.50.1580:FF:000012">
    <property type="entry name" value="Probable 6-oxopurine nucleoside phosphorylase"/>
    <property type="match status" value="1"/>
</dbReference>
<dbReference type="Gene3D" id="3.40.50.1580">
    <property type="entry name" value="Nucleoside phosphorylase domain"/>
    <property type="match status" value="1"/>
</dbReference>
<dbReference type="HAMAP" id="MF_01963">
    <property type="entry name" value="MTAP"/>
    <property type="match status" value="1"/>
</dbReference>
<dbReference type="InterPro" id="IPR010044">
    <property type="entry name" value="MTAP"/>
</dbReference>
<dbReference type="InterPro" id="IPR000845">
    <property type="entry name" value="Nucleoside_phosphorylase_d"/>
</dbReference>
<dbReference type="InterPro" id="IPR035994">
    <property type="entry name" value="Nucleoside_phosphorylase_sf"/>
</dbReference>
<dbReference type="InterPro" id="IPR018099">
    <property type="entry name" value="Purine_phosphorylase-2_CS"/>
</dbReference>
<dbReference type="NCBIfam" id="TIGR01694">
    <property type="entry name" value="MTAP"/>
    <property type="match status" value="1"/>
</dbReference>
<dbReference type="NCBIfam" id="NF006334">
    <property type="entry name" value="PRK08564.1"/>
    <property type="match status" value="1"/>
</dbReference>
<dbReference type="NCBIfam" id="NF006599">
    <property type="entry name" value="PRK09136.1"/>
    <property type="match status" value="1"/>
</dbReference>
<dbReference type="PANTHER" id="PTHR42679">
    <property type="entry name" value="S-METHYL-5'-THIOADENOSINE PHOSPHORYLASE"/>
    <property type="match status" value="1"/>
</dbReference>
<dbReference type="PANTHER" id="PTHR42679:SF3">
    <property type="entry name" value="S-METHYL-5'-THIOADENOSINE PHOSPHORYLASE"/>
    <property type="match status" value="1"/>
</dbReference>
<dbReference type="Pfam" id="PF01048">
    <property type="entry name" value="PNP_UDP_1"/>
    <property type="match status" value="1"/>
</dbReference>
<dbReference type="SUPFAM" id="SSF53167">
    <property type="entry name" value="Purine and uridine phosphorylases"/>
    <property type="match status" value="1"/>
</dbReference>
<dbReference type="PROSITE" id="PS01240">
    <property type="entry name" value="PNP_MTAP_2"/>
    <property type="match status" value="1"/>
</dbReference>
<protein>
    <recommendedName>
        <fullName evidence="1">S-methyl-5'-thioadenosine phosphorylase</fullName>
        <ecNumber evidence="1">2.4.2.28</ecNumber>
    </recommendedName>
    <alternativeName>
        <fullName evidence="1">5'-methylthioadenosine phosphorylase</fullName>
        <shortName evidence="1">MTA phosphorylase</shortName>
        <shortName evidence="1">MTAP</shortName>
        <shortName>PfMTAP</shortName>
    </alternativeName>
</protein>
<evidence type="ECO:0000255" key="1">
    <source>
        <dbReference type="HAMAP-Rule" id="MF_01963"/>
    </source>
</evidence>
<evidence type="ECO:0000269" key="2">
    <source>
    </source>
</evidence>
<evidence type="ECO:0000269" key="3">
    <source>
    </source>
</evidence>
<evidence type="ECO:0000269" key="4">
    <source>
    </source>
</evidence>
<gene>
    <name evidence="1" type="primary">mtnP</name>
    <name type="ordered locus">PF0016</name>
</gene>
<name>MTAP_PYRFU</name>
<keyword id="KW-0903">Direct protein sequencing</keyword>
<keyword id="KW-1015">Disulfide bond</keyword>
<keyword id="KW-0328">Glycosyltransferase</keyword>
<keyword id="KW-0660">Purine salvage</keyword>
<keyword id="KW-1185">Reference proteome</keyword>
<keyword id="KW-0808">Transferase</keyword>
<feature type="chain" id="PRO_0000415107" description="S-methyl-5'-thioadenosine phosphorylase">
    <location>
        <begin position="1"/>
        <end position="257"/>
    </location>
</feature>
<feature type="binding site" evidence="1">
    <location>
        <position position="10"/>
    </location>
    <ligand>
        <name>phosphate</name>
        <dbReference type="ChEBI" id="CHEBI:43474"/>
    </ligand>
</feature>
<feature type="binding site" evidence="1">
    <location>
        <begin position="50"/>
        <end position="51"/>
    </location>
    <ligand>
        <name>phosphate</name>
        <dbReference type="ChEBI" id="CHEBI:43474"/>
    </ligand>
</feature>
<feature type="binding site" evidence="1">
    <location>
        <position position="180"/>
    </location>
    <ligand>
        <name>substrate</name>
    </ligand>
</feature>
<feature type="binding site" evidence="1">
    <location>
        <position position="181"/>
    </location>
    <ligand>
        <name>phosphate</name>
        <dbReference type="ChEBI" id="CHEBI:43474"/>
    </ligand>
</feature>
<feature type="binding site" evidence="1">
    <location>
        <begin position="204"/>
        <end position="206"/>
    </location>
    <ligand>
        <name>substrate</name>
    </ligand>
</feature>
<feature type="site" description="Important for substrate specificity" evidence="1">
    <location>
        <position position="163"/>
    </location>
</feature>
<feature type="site" description="Important for substrate specificity" evidence="1">
    <location>
        <position position="215"/>
    </location>
</feature>
<feature type="disulfide bond" evidence="3">
    <location>
        <begin position="130"/>
        <end position="195"/>
    </location>
</feature>
<feature type="disulfide bond" evidence="3">
    <location>
        <begin position="246"/>
        <end position="248"/>
    </location>
</feature>
<comment type="function">
    <text evidence="1 2 3 4">Catalyzes the reversible phosphorylation of S-methyl-5'-thioadenosine (MTA) to adenine and 5-methylthioribose-1-phosphate. Involved in the breakdown of MTA, a major by-product of polyamine biosynthesis. Responsible for the first step in the methionine salvage pathway after MTA has been generated from S-adenosylmethionine. Has broad substrate specificity with 6-aminopurine nucleosides as preferred substrates.</text>
</comment>
<comment type="catalytic activity">
    <reaction evidence="1">
        <text>S-methyl-5'-thioadenosine + phosphate = 5-(methylsulfanyl)-alpha-D-ribose 1-phosphate + adenine</text>
        <dbReference type="Rhea" id="RHEA:11852"/>
        <dbReference type="ChEBI" id="CHEBI:16708"/>
        <dbReference type="ChEBI" id="CHEBI:17509"/>
        <dbReference type="ChEBI" id="CHEBI:43474"/>
        <dbReference type="ChEBI" id="CHEBI:58533"/>
        <dbReference type="EC" id="2.4.2.28"/>
    </reaction>
</comment>
<comment type="biophysicochemical properties">
    <kinetics>
        <KM evidence="2">147 uM for S-methyl-5'-thioadenosine</KM>
        <KM evidence="2">109 uM for adenosine</KM>
        <KM evidence="2">963 uM for inosine</KM>
        <KM evidence="2">916 uM for guanosine</KM>
    </kinetics>
    <phDependence>
        <text evidence="2">Optimum pH is 7.4. Active from pH 5 to 10.</text>
    </phDependence>
    <temperatureDependence>
        <text evidence="2">Optimum temperature is 125 degrees Celsius. Thermostable up to 137 degrees Celsius.</text>
    </temperatureDependence>
</comment>
<comment type="pathway">
    <text evidence="1">Amino-acid biosynthesis; L-methionine biosynthesis via salvage pathway; S-methyl-5-thio-alpha-D-ribose 1-phosphate from S-methyl-5'-thioadenosine (phosphorylase route): step 1/1.</text>
</comment>
<comment type="subunit">
    <text evidence="1 2">Homohexamer. Dimer of a homotrimer.</text>
</comment>
<comment type="similarity">
    <text evidence="1">Belongs to the PNP/MTAP phosphorylase family. MTAP subfamily.</text>
</comment>